<organism>
    <name type="scientific">Streptococcus pneumoniae (strain Taiwan19F-14)</name>
    <dbReference type="NCBI Taxonomy" id="487213"/>
    <lineage>
        <taxon>Bacteria</taxon>
        <taxon>Bacillati</taxon>
        <taxon>Bacillota</taxon>
        <taxon>Bacilli</taxon>
        <taxon>Lactobacillales</taxon>
        <taxon>Streptococcaceae</taxon>
        <taxon>Streptococcus</taxon>
    </lineage>
</organism>
<dbReference type="EC" id="5.3.1.26" evidence="1"/>
<dbReference type="EMBL" id="CP000921">
    <property type="protein sequence ID" value="ACO23743.1"/>
    <property type="molecule type" value="Genomic_DNA"/>
</dbReference>
<dbReference type="RefSeq" id="WP_001216915.1">
    <property type="nucleotide sequence ID" value="NC_012469.1"/>
</dbReference>
<dbReference type="SMR" id="C1CRA5"/>
<dbReference type="GeneID" id="45653584"/>
<dbReference type="KEGG" id="snt:SPT_1034"/>
<dbReference type="HOGENOM" id="CLU_091396_2_0_9"/>
<dbReference type="UniPathway" id="UPA00702">
    <property type="reaction ID" value="UER00714"/>
</dbReference>
<dbReference type="GO" id="GO:0050044">
    <property type="term" value="F:galactose-6-phosphate isomerase activity"/>
    <property type="evidence" value="ECO:0007669"/>
    <property type="project" value="UniProtKB-UniRule"/>
</dbReference>
<dbReference type="GO" id="GO:0004751">
    <property type="term" value="F:ribose-5-phosphate isomerase activity"/>
    <property type="evidence" value="ECO:0007669"/>
    <property type="project" value="TreeGrafter"/>
</dbReference>
<dbReference type="GO" id="GO:0019316">
    <property type="term" value="P:D-allose catabolic process"/>
    <property type="evidence" value="ECO:0007669"/>
    <property type="project" value="TreeGrafter"/>
</dbReference>
<dbReference type="GO" id="GO:0019388">
    <property type="term" value="P:galactose catabolic process"/>
    <property type="evidence" value="ECO:0007669"/>
    <property type="project" value="UniProtKB-UniPathway"/>
</dbReference>
<dbReference type="GO" id="GO:0019512">
    <property type="term" value="P:lactose catabolic process via tagatose-6-phosphate"/>
    <property type="evidence" value="ECO:0007669"/>
    <property type="project" value="UniProtKB-UniRule"/>
</dbReference>
<dbReference type="GO" id="GO:0009052">
    <property type="term" value="P:pentose-phosphate shunt, non-oxidative branch"/>
    <property type="evidence" value="ECO:0007669"/>
    <property type="project" value="TreeGrafter"/>
</dbReference>
<dbReference type="Gene3D" id="3.40.1400.10">
    <property type="entry name" value="Sugar-phosphate isomerase, RpiB/LacA/LacB"/>
    <property type="match status" value="1"/>
</dbReference>
<dbReference type="HAMAP" id="MF_01556">
    <property type="entry name" value="LacB"/>
    <property type="match status" value="1"/>
</dbReference>
<dbReference type="InterPro" id="IPR004784">
    <property type="entry name" value="LacB"/>
</dbReference>
<dbReference type="InterPro" id="IPR003500">
    <property type="entry name" value="RpiB_LacA_LacB"/>
</dbReference>
<dbReference type="InterPro" id="IPR036569">
    <property type="entry name" value="RpiB_LacA_LacB_sf"/>
</dbReference>
<dbReference type="NCBIfam" id="TIGR01119">
    <property type="entry name" value="lacB"/>
    <property type="match status" value="1"/>
</dbReference>
<dbReference type="NCBIfam" id="NF004051">
    <property type="entry name" value="PRK05571.1"/>
    <property type="match status" value="1"/>
</dbReference>
<dbReference type="NCBIfam" id="NF006381">
    <property type="entry name" value="PRK08622.1"/>
    <property type="match status" value="1"/>
</dbReference>
<dbReference type="NCBIfam" id="NF009258">
    <property type="entry name" value="PRK12615.1"/>
    <property type="match status" value="1"/>
</dbReference>
<dbReference type="NCBIfam" id="TIGR00689">
    <property type="entry name" value="rpiB_lacA_lacB"/>
    <property type="match status" value="1"/>
</dbReference>
<dbReference type="PANTHER" id="PTHR30345:SF0">
    <property type="entry name" value="DNA DAMAGE-REPAIR_TOLERATION PROTEIN DRT102"/>
    <property type="match status" value="1"/>
</dbReference>
<dbReference type="PANTHER" id="PTHR30345">
    <property type="entry name" value="RIBOSE-5-PHOSPHATE ISOMERASE B"/>
    <property type="match status" value="1"/>
</dbReference>
<dbReference type="Pfam" id="PF02502">
    <property type="entry name" value="LacAB_rpiB"/>
    <property type="match status" value="1"/>
</dbReference>
<dbReference type="PIRSF" id="PIRSF005384">
    <property type="entry name" value="RpiB_LacA_B"/>
    <property type="match status" value="1"/>
</dbReference>
<dbReference type="SUPFAM" id="SSF89623">
    <property type="entry name" value="Ribose/Galactose isomerase RpiB/AlsB"/>
    <property type="match status" value="1"/>
</dbReference>
<sequence length="171" mass="18958">MRIAIGCDHIVTDEKMAVSEFLKSKGYEVIDFGTYDHTRTHYPIFGKKVGEAVTSGQADLGVCICGTGVGINNAVNKVPGVRSALVRDMTTALYAKEQLNANVIGFGGKITGELLMCDIIEAFIHAEYKPSEENKKLIAKIEHVETHNAQQTDANFFTEFLEKWDRGEYHD</sequence>
<protein>
    <recommendedName>
        <fullName evidence="1">Galactose-6-phosphate isomerase subunit LacB</fullName>
        <ecNumber evidence="1">5.3.1.26</ecNumber>
    </recommendedName>
</protein>
<reference key="1">
    <citation type="journal article" date="2010" name="Genome Biol.">
        <title>Structure and dynamics of the pan-genome of Streptococcus pneumoniae and closely related species.</title>
        <authorList>
            <person name="Donati C."/>
            <person name="Hiller N.L."/>
            <person name="Tettelin H."/>
            <person name="Muzzi A."/>
            <person name="Croucher N.J."/>
            <person name="Angiuoli S.V."/>
            <person name="Oggioni M."/>
            <person name="Dunning Hotopp J.C."/>
            <person name="Hu F.Z."/>
            <person name="Riley D.R."/>
            <person name="Covacci A."/>
            <person name="Mitchell T.J."/>
            <person name="Bentley S.D."/>
            <person name="Kilian M."/>
            <person name="Ehrlich G.D."/>
            <person name="Rappuoli R."/>
            <person name="Moxon E.R."/>
            <person name="Masignani V."/>
        </authorList>
    </citation>
    <scope>NUCLEOTIDE SEQUENCE [LARGE SCALE GENOMIC DNA]</scope>
    <source>
        <strain>Taiwan19F-14</strain>
    </source>
</reference>
<feature type="chain" id="PRO_1000185407" description="Galactose-6-phosphate isomerase subunit LacB">
    <location>
        <begin position="1"/>
        <end position="171"/>
    </location>
</feature>
<keyword id="KW-0413">Isomerase</keyword>
<keyword id="KW-0423">Lactose metabolism</keyword>
<proteinExistence type="inferred from homology"/>
<comment type="catalytic activity">
    <reaction evidence="1">
        <text>aldehydo-D-galactose 6-phosphate = keto-D-tagatose 6-phosphate</text>
        <dbReference type="Rhea" id="RHEA:13033"/>
        <dbReference type="ChEBI" id="CHEBI:58255"/>
        <dbReference type="ChEBI" id="CHEBI:134283"/>
        <dbReference type="EC" id="5.3.1.26"/>
    </reaction>
</comment>
<comment type="pathway">
    <text evidence="1">Carbohydrate metabolism; D-galactose 6-phosphate degradation; D-tagatose 6-phosphate from D-galactose 6-phosphate: step 1/1.</text>
</comment>
<comment type="subunit">
    <text evidence="1">Heteromultimeric protein consisting of LacA and LacB.</text>
</comment>
<comment type="similarity">
    <text evidence="1">Belongs to the LacAB/RpiB family.</text>
</comment>
<evidence type="ECO:0000255" key="1">
    <source>
        <dbReference type="HAMAP-Rule" id="MF_01556"/>
    </source>
</evidence>
<gene>
    <name evidence="1" type="primary">lacB</name>
    <name type="ordered locus">SPT_1034</name>
</gene>
<accession>C1CRA5</accession>
<name>LACB_STRZT</name>